<sequence length="551" mass="60604">MALTLAAHKTLPRRKLVLVVLDGVGIGPRDEYDAVHVAKTPLMDALFNDPKHFRSICAHGTAVGLPTDADMGNSEVGHNALGAGRVVLQGASLVDDALESGEIFTSEGYRYLHGAFSQPGRTLHLIGLLSDGGVHSRDNQVYQILKHAGANGAKRIRVHALYDGRDVPDKTSFKFTDELEEVLAKLREGGCDARIASGGGRMFVTMDRYEADWSIVERGWRAQVLGEGRAFKSAREALTKFREEDANISDQYYPPFVIAGDDGRPIGTIEDGDAVLCFNFRGDRVIEMSRAFEEEEFDKFNRVRLPKVRYAGMMRYDGDLGIPNNFLVPPPKLTRTSEEYLIGSGCNIFALSETQKFGHVTYFWNGNRSGKLSEERETFCEIPSDRVQFNQKPLMKSKEITDAAVDAIKSGKYDMIRINYPNGDMVGHTGDLKATITSLEAVDQSLQRLKEAVDSVNGVFLITADHGNSDDMVQRDKKGKPVRDAEGNLMPLTSHTLAPVPVFIGGAGLDPRVQMRTDLPRAGLANVTATFINLMGFEAPSDYEPSLIEVA</sequence>
<gene>
    <name evidence="9" type="primary">PGAM</name>
    <name evidence="18" type="ORF">Tb10.6k15.2620</name>
</gene>
<dbReference type="EC" id="5.4.2.12" evidence="4 5 7 8 15"/>
<dbReference type="EMBL" id="CM000208">
    <property type="protein sequence ID" value="EAN78199.1"/>
    <property type="molecule type" value="Genomic_DNA"/>
</dbReference>
<dbReference type="RefSeq" id="XP_823027.1">
    <property type="nucleotide sequence ID" value="XM_817934.1"/>
</dbReference>
<dbReference type="PDB" id="3NVL">
    <property type="method" value="X-ray"/>
    <property type="resolution" value="2.30 A"/>
    <property type="chains" value="A/B=1-551"/>
</dbReference>
<dbReference type="PDBsum" id="3NVL"/>
<dbReference type="SMR" id="Q38AH1"/>
<dbReference type="MINT" id="Q38AH1"/>
<dbReference type="STRING" id="185431.Q38AH1"/>
<dbReference type="PaxDb" id="5691-EAN78199"/>
<dbReference type="GeneID" id="3662614"/>
<dbReference type="KEGG" id="tbr:Tb10.6k15.2620"/>
<dbReference type="VEuPathDB" id="TriTrypDB:Tb927.10.7930"/>
<dbReference type="eggNOG" id="KOG4513">
    <property type="taxonomic scope" value="Eukaryota"/>
</dbReference>
<dbReference type="InParanoid" id="Q38AH1"/>
<dbReference type="OMA" id="FMDGRDT"/>
<dbReference type="OrthoDB" id="952271at2759"/>
<dbReference type="UniPathway" id="UPA00109">
    <property type="reaction ID" value="UER00186"/>
</dbReference>
<dbReference type="EvolutionaryTrace" id="Q38AH1"/>
<dbReference type="Proteomes" id="UP000008524">
    <property type="component" value="Chromosome 10"/>
</dbReference>
<dbReference type="GO" id="GO:0097014">
    <property type="term" value="C:ciliary plasm"/>
    <property type="evidence" value="ECO:0000314"/>
    <property type="project" value="GeneDB"/>
</dbReference>
<dbReference type="GO" id="GO:0005737">
    <property type="term" value="C:cytoplasm"/>
    <property type="evidence" value="ECO:0000314"/>
    <property type="project" value="GeneDB"/>
</dbReference>
<dbReference type="GO" id="GO:0005829">
    <property type="term" value="C:cytosol"/>
    <property type="evidence" value="ECO:0000304"/>
    <property type="project" value="GeneDB"/>
</dbReference>
<dbReference type="GO" id="GO:0005654">
    <property type="term" value="C:nucleoplasm"/>
    <property type="evidence" value="ECO:0000314"/>
    <property type="project" value="GeneDB"/>
</dbReference>
<dbReference type="GO" id="GO:0042802">
    <property type="term" value="F:identical protein binding"/>
    <property type="evidence" value="ECO:0000353"/>
    <property type="project" value="IntAct"/>
</dbReference>
<dbReference type="GO" id="GO:0030145">
    <property type="term" value="F:manganese ion binding"/>
    <property type="evidence" value="ECO:0000318"/>
    <property type="project" value="GO_Central"/>
</dbReference>
<dbReference type="GO" id="GO:0004619">
    <property type="term" value="F:phosphoglycerate mutase activity"/>
    <property type="evidence" value="ECO:0000318"/>
    <property type="project" value="GO_Central"/>
</dbReference>
<dbReference type="GO" id="GO:0005975">
    <property type="term" value="P:carbohydrate metabolic process"/>
    <property type="evidence" value="ECO:0000318"/>
    <property type="project" value="GO_Central"/>
</dbReference>
<dbReference type="GO" id="GO:0006094">
    <property type="term" value="P:gluconeogenesis"/>
    <property type="evidence" value="ECO:0000304"/>
    <property type="project" value="GeneDB"/>
</dbReference>
<dbReference type="GO" id="GO:0006007">
    <property type="term" value="P:glucose catabolic process"/>
    <property type="evidence" value="ECO:0007669"/>
    <property type="project" value="InterPro"/>
</dbReference>
<dbReference type="GO" id="GO:0006096">
    <property type="term" value="P:glycolytic process"/>
    <property type="evidence" value="ECO:0000304"/>
    <property type="project" value="GeneDB"/>
</dbReference>
<dbReference type="CDD" id="cd16010">
    <property type="entry name" value="iPGM"/>
    <property type="match status" value="1"/>
</dbReference>
<dbReference type="FunFam" id="3.40.1450.10:FF:000002">
    <property type="entry name" value="2,3-bisphosphoglycerate-independent phosphoglycerate mutase"/>
    <property type="match status" value="1"/>
</dbReference>
<dbReference type="Gene3D" id="3.40.720.10">
    <property type="entry name" value="Alkaline Phosphatase, subunit A"/>
    <property type="match status" value="1"/>
</dbReference>
<dbReference type="Gene3D" id="3.40.1450.10">
    <property type="entry name" value="BPG-independent phosphoglycerate mutase, domain B"/>
    <property type="match status" value="1"/>
</dbReference>
<dbReference type="InterPro" id="IPR017850">
    <property type="entry name" value="Alkaline_phosphatase_core_sf"/>
</dbReference>
<dbReference type="InterPro" id="IPR011258">
    <property type="entry name" value="BPG-indep_PGM_N"/>
</dbReference>
<dbReference type="InterPro" id="IPR006124">
    <property type="entry name" value="Metalloenzyme"/>
</dbReference>
<dbReference type="InterPro" id="IPR036646">
    <property type="entry name" value="PGAM_B_sf"/>
</dbReference>
<dbReference type="InterPro" id="IPR005995">
    <property type="entry name" value="Pgm_bpd_ind"/>
</dbReference>
<dbReference type="NCBIfam" id="TIGR01307">
    <property type="entry name" value="pgm_bpd_ind"/>
    <property type="match status" value="1"/>
</dbReference>
<dbReference type="PANTHER" id="PTHR31637">
    <property type="entry name" value="2,3-BISPHOSPHOGLYCERATE-INDEPENDENT PHOSPHOGLYCERATE MUTASE"/>
    <property type="match status" value="1"/>
</dbReference>
<dbReference type="PANTHER" id="PTHR31637:SF0">
    <property type="entry name" value="2,3-BISPHOSPHOGLYCERATE-INDEPENDENT PHOSPHOGLYCERATE MUTASE"/>
    <property type="match status" value="1"/>
</dbReference>
<dbReference type="Pfam" id="PF06415">
    <property type="entry name" value="iPGM_N"/>
    <property type="match status" value="1"/>
</dbReference>
<dbReference type="Pfam" id="PF01676">
    <property type="entry name" value="Metalloenzyme"/>
    <property type="match status" value="1"/>
</dbReference>
<dbReference type="PIRSF" id="PIRSF001492">
    <property type="entry name" value="IPGAM"/>
    <property type="match status" value="1"/>
</dbReference>
<dbReference type="SUPFAM" id="SSF64158">
    <property type="entry name" value="2,3-Bisphosphoglycerate-independent phosphoglycerate mutase, substrate-binding domain"/>
    <property type="match status" value="1"/>
</dbReference>
<dbReference type="SUPFAM" id="SSF53649">
    <property type="entry name" value="Alkaline phosphatase-like"/>
    <property type="match status" value="1"/>
</dbReference>
<name>PGAMI_TRYB2</name>
<organism evidence="19">
    <name type="scientific">Trypanosoma brucei brucei (strain 927/4 GUTat10.1)</name>
    <dbReference type="NCBI Taxonomy" id="185431"/>
    <lineage>
        <taxon>Eukaryota</taxon>
        <taxon>Discoba</taxon>
        <taxon>Euglenozoa</taxon>
        <taxon>Kinetoplastea</taxon>
        <taxon>Metakinetoplastina</taxon>
        <taxon>Trypanosomatida</taxon>
        <taxon>Trypanosomatidae</taxon>
        <taxon>Trypanosoma</taxon>
    </lineage>
</organism>
<evidence type="ECO:0000255" key="1">
    <source>
        <dbReference type="PIRSR" id="PIRSR001492-1"/>
    </source>
</evidence>
<evidence type="ECO:0000255" key="2">
    <source>
        <dbReference type="PIRSR" id="PIRSR001492-2"/>
    </source>
</evidence>
<evidence type="ECO:0000255" key="3">
    <source>
        <dbReference type="PIRSR" id="PIRSR001492-3"/>
    </source>
</evidence>
<evidence type="ECO:0000269" key="4">
    <source>
    </source>
</evidence>
<evidence type="ECO:0000269" key="5">
    <source>
    </source>
</evidence>
<evidence type="ECO:0000269" key="6">
    <source>
    </source>
</evidence>
<evidence type="ECO:0000269" key="7">
    <source>
    </source>
</evidence>
<evidence type="ECO:0000269" key="8">
    <source>
    </source>
</evidence>
<evidence type="ECO:0000303" key="9">
    <source>
    </source>
</evidence>
<evidence type="ECO:0000303" key="10">
    <source>
    </source>
</evidence>
<evidence type="ECO:0000303" key="11">
    <source>
    </source>
</evidence>
<evidence type="ECO:0000303" key="12">
    <source>
    </source>
</evidence>
<evidence type="ECO:0000305" key="13"/>
<evidence type="ECO:0000305" key="14">
    <source>
    </source>
</evidence>
<evidence type="ECO:0000305" key="15">
    <source>
    </source>
</evidence>
<evidence type="ECO:0000305" key="16">
    <source>
    </source>
</evidence>
<evidence type="ECO:0000305" key="17">
    <source>
    </source>
</evidence>
<evidence type="ECO:0000312" key="18">
    <source>
        <dbReference type="EMBL" id="EAN78199.1"/>
    </source>
</evidence>
<evidence type="ECO:0000312" key="19">
    <source>
        <dbReference type="Proteomes" id="UP000008524"/>
    </source>
</evidence>
<evidence type="ECO:0007744" key="20">
    <source>
        <dbReference type="PDB" id="3NVL"/>
    </source>
</evidence>
<evidence type="ECO:0007829" key="21">
    <source>
        <dbReference type="PDB" id="3NVL"/>
    </source>
</evidence>
<feature type="chain" id="PRO_0000457707" description="2,3-bisphosphoglycerate-independent phosphoglycerate mutase">
    <location>
        <begin position="1"/>
        <end position="551"/>
    </location>
</feature>
<feature type="active site" description="Phosphoserine intermediate" evidence="1 5">
    <location>
        <position position="74"/>
    </location>
</feature>
<feature type="binding site" evidence="3 17 20">
    <location>
        <position position="22"/>
    </location>
    <ligand>
        <name>Mn(2+)</name>
        <dbReference type="ChEBI" id="CHEBI:29035"/>
        <label>2</label>
    </ligand>
</feature>
<feature type="binding site" evidence="3 17 20">
    <location>
        <position position="74"/>
    </location>
    <ligand>
        <name>Mn(2+)</name>
        <dbReference type="ChEBI" id="CHEBI:29035"/>
        <label>2</label>
    </ligand>
</feature>
<feature type="binding site" evidence="2">
    <location>
        <position position="135"/>
    </location>
    <ligand>
        <name>substrate</name>
    </ligand>
</feature>
<feature type="binding site" evidence="2">
    <location>
        <begin position="165"/>
        <end position="166"/>
    </location>
    <ligand>
        <name>substrate</name>
    </ligand>
</feature>
<feature type="binding site" evidence="2">
    <location>
        <position position="201"/>
    </location>
    <ligand>
        <name>substrate</name>
    </ligand>
</feature>
<feature type="binding site" evidence="2">
    <location>
        <position position="208"/>
    </location>
    <ligand>
        <name>substrate</name>
    </ligand>
</feature>
<feature type="binding site" evidence="2">
    <location>
        <begin position="281"/>
        <end position="284"/>
    </location>
    <ligand>
        <name>substrate</name>
    </ligand>
</feature>
<feature type="binding site" evidence="17 20">
    <location>
        <position position="319"/>
    </location>
    <ligand>
        <name>Mn(2+)</name>
        <dbReference type="ChEBI" id="CHEBI:29035"/>
        <label>1</label>
    </ligand>
</feature>
<feature type="binding site" evidence="2">
    <location>
        <position position="356"/>
    </location>
    <ligand>
        <name>substrate</name>
    </ligand>
</feature>
<feature type="binding site" evidence="3 17 20">
    <location>
        <position position="424"/>
    </location>
    <ligand>
        <name>Mn(2+)</name>
        <dbReference type="ChEBI" id="CHEBI:29035"/>
        <label>1</label>
    </ligand>
</feature>
<feature type="binding site" evidence="3 17 20">
    <location>
        <position position="428"/>
    </location>
    <ligand>
        <name>Mn(2+)</name>
        <dbReference type="ChEBI" id="CHEBI:29035"/>
        <label>1</label>
    </ligand>
</feature>
<feature type="binding site" evidence="3 17 20">
    <location>
        <position position="465"/>
    </location>
    <ligand>
        <name>Mn(2+)</name>
        <dbReference type="ChEBI" id="CHEBI:29035"/>
        <label>2</label>
    </ligand>
</feature>
<feature type="binding site" evidence="3 17 20">
    <location>
        <position position="466"/>
    </location>
    <ligand>
        <name>Mn(2+)</name>
        <dbReference type="ChEBI" id="CHEBI:29035"/>
        <label>2</label>
    </ligand>
</feature>
<feature type="binding site" evidence="3 17 20">
    <location>
        <position position="495"/>
    </location>
    <ligand>
        <name>Mn(2+)</name>
        <dbReference type="ChEBI" id="CHEBI:29035"/>
        <label>1</label>
    </ligand>
</feature>
<feature type="mutagenesis site" description="Loss of catalytic activity." evidence="8">
    <original>D</original>
    <variation>A</variation>
    <location>
        <position position="319"/>
    </location>
</feature>
<feature type="strand" evidence="21">
    <location>
        <begin position="16"/>
        <end position="21"/>
    </location>
</feature>
<feature type="helix" evidence="21">
    <location>
        <begin position="34"/>
        <end position="37"/>
    </location>
</feature>
<feature type="helix" evidence="21">
    <location>
        <begin position="41"/>
        <end position="46"/>
    </location>
</feature>
<feature type="helix" evidence="21">
    <location>
        <begin position="50"/>
        <end position="52"/>
    </location>
</feature>
<feature type="strand" evidence="21">
    <location>
        <begin position="53"/>
        <end position="57"/>
    </location>
</feature>
<feature type="helix" evidence="21">
    <location>
        <begin position="60"/>
        <end position="63"/>
    </location>
</feature>
<feature type="helix" evidence="21">
    <location>
        <begin position="74"/>
        <end position="83"/>
    </location>
</feature>
<feature type="helix" evidence="21">
    <location>
        <begin position="92"/>
        <end position="99"/>
    </location>
</feature>
<feature type="helix" evidence="21">
    <location>
        <begin position="102"/>
        <end position="105"/>
    </location>
</feature>
<feature type="helix" evidence="21">
    <location>
        <begin position="107"/>
        <end position="116"/>
    </location>
</feature>
<feature type="strand" evidence="21">
    <location>
        <begin position="123"/>
        <end position="128"/>
    </location>
</feature>
<feature type="helix" evidence="21">
    <location>
        <begin position="138"/>
        <end position="149"/>
    </location>
</feature>
<feature type="turn" evidence="21">
    <location>
        <begin position="150"/>
        <end position="152"/>
    </location>
</feature>
<feature type="strand" evidence="21">
    <location>
        <begin position="155"/>
        <end position="162"/>
    </location>
</feature>
<feature type="strand" evidence="21">
    <location>
        <begin position="164"/>
        <end position="167"/>
    </location>
</feature>
<feature type="turn" evidence="21">
    <location>
        <begin position="169"/>
        <end position="171"/>
    </location>
</feature>
<feature type="helix" evidence="21">
    <location>
        <begin position="172"/>
        <end position="188"/>
    </location>
</feature>
<feature type="strand" evidence="21">
    <location>
        <begin position="192"/>
        <end position="200"/>
    </location>
</feature>
<feature type="turn" evidence="21">
    <location>
        <begin position="201"/>
        <end position="203"/>
    </location>
</feature>
<feature type="helix" evidence="21">
    <location>
        <begin position="213"/>
        <end position="223"/>
    </location>
</feature>
<feature type="strand" evidence="21">
    <location>
        <begin position="228"/>
        <end position="232"/>
    </location>
</feature>
<feature type="helix" evidence="21">
    <location>
        <begin position="234"/>
        <end position="244"/>
    </location>
</feature>
<feature type="helix" evidence="21">
    <location>
        <begin position="250"/>
        <end position="252"/>
    </location>
</feature>
<feature type="strand" evidence="21">
    <location>
        <begin position="256"/>
        <end position="259"/>
    </location>
</feature>
<feature type="strand" evidence="21">
    <location>
        <begin position="263"/>
        <end position="266"/>
    </location>
</feature>
<feature type="strand" evidence="21">
    <location>
        <begin position="274"/>
        <end position="277"/>
    </location>
</feature>
<feature type="turn" evidence="21">
    <location>
        <begin position="283"/>
        <end position="285"/>
    </location>
</feature>
<feature type="helix" evidence="21">
    <location>
        <begin position="286"/>
        <end position="293"/>
    </location>
</feature>
<feature type="strand" evidence="21">
    <location>
        <begin position="309"/>
        <end position="314"/>
    </location>
</feature>
<feature type="turn" evidence="21">
    <location>
        <begin position="318"/>
        <end position="321"/>
    </location>
</feature>
<feature type="strand" evidence="21">
    <location>
        <begin position="326"/>
        <end position="328"/>
    </location>
</feature>
<feature type="helix" evidence="21">
    <location>
        <begin position="337"/>
        <end position="342"/>
    </location>
</feature>
<feature type="turn" evidence="21">
    <location>
        <begin position="343"/>
        <end position="345"/>
    </location>
</feature>
<feature type="strand" evidence="21">
    <location>
        <begin position="348"/>
        <end position="353"/>
    </location>
</feature>
<feature type="helix" evidence="21">
    <location>
        <begin position="354"/>
        <end position="360"/>
    </location>
</feature>
<feature type="turn" evidence="21">
    <location>
        <begin position="361"/>
        <end position="366"/>
    </location>
</feature>
<feature type="turn" evidence="21">
    <location>
        <begin position="374"/>
        <end position="376"/>
    </location>
</feature>
<feature type="strand" evidence="21">
    <location>
        <begin position="377"/>
        <end position="382"/>
    </location>
</feature>
<feature type="turn" evidence="21">
    <location>
        <begin position="393"/>
        <end position="396"/>
    </location>
</feature>
<feature type="helix" evidence="21">
    <location>
        <begin position="397"/>
        <end position="410"/>
    </location>
</feature>
<feature type="strand" evidence="21">
    <location>
        <begin position="414"/>
        <end position="420"/>
    </location>
</feature>
<feature type="helix" evidence="21">
    <location>
        <begin position="422"/>
        <end position="427"/>
    </location>
</feature>
<feature type="turn" evidence="21">
    <location>
        <begin position="428"/>
        <end position="430"/>
    </location>
</feature>
<feature type="helix" evidence="21">
    <location>
        <begin position="432"/>
        <end position="454"/>
    </location>
</feature>
<feature type="turn" evidence="21">
    <location>
        <begin position="455"/>
        <end position="457"/>
    </location>
</feature>
<feature type="strand" evidence="21">
    <location>
        <begin position="459"/>
        <end position="463"/>
    </location>
</feature>
<feature type="strand" evidence="21">
    <location>
        <begin position="465"/>
        <end position="468"/>
    </location>
</feature>
<feature type="strand" evidence="21">
    <location>
        <begin position="500"/>
        <end position="505"/>
    </location>
</feature>
<feature type="strand" evidence="21">
    <location>
        <begin position="513"/>
        <end position="515"/>
    </location>
</feature>
<feature type="helix" evidence="21">
    <location>
        <begin position="524"/>
        <end position="526"/>
    </location>
</feature>
<feature type="helix" evidence="21">
    <location>
        <begin position="527"/>
        <end position="534"/>
    </location>
</feature>
<feature type="strand" evidence="21">
    <location>
        <begin position="547"/>
        <end position="550"/>
    </location>
</feature>
<comment type="function">
    <text evidence="4 5 6 7 8">Catalyzes the interconversion of 2-phosphoglycerate (2-PGA) and 3-phosphoglycerate (3-PGA).</text>
</comment>
<comment type="catalytic activity">
    <reaction evidence="4 5 7 8 15">
        <text>(2R)-2-phosphoglycerate = (2R)-3-phosphoglycerate</text>
        <dbReference type="Rhea" id="RHEA:15901"/>
        <dbReference type="ChEBI" id="CHEBI:58272"/>
        <dbReference type="ChEBI" id="CHEBI:58289"/>
        <dbReference type="EC" id="5.4.2.12"/>
    </reaction>
    <physiologicalReaction direction="left-to-right" evidence="4">
        <dbReference type="Rhea" id="RHEA:15902"/>
    </physiologicalReaction>
    <physiologicalReaction direction="right-to-left" evidence="4">
        <dbReference type="Rhea" id="RHEA:15903"/>
    </physiologicalReaction>
</comment>
<comment type="cofactor">
    <cofactor evidence="5">
        <name>Mn(2+)</name>
        <dbReference type="ChEBI" id="CHEBI:29035"/>
    </cofactor>
    <text evidence="16 17">Binds 2 manganese ions per subunit (Probable). May also use Mg(2+) and Zn(2+) (Probable).</text>
</comment>
<comment type="biophysicochemical properties">
    <kinetics>
        <KM evidence="4">0.15 mM for 3-phosphoglycerate (at pH 7.4 and 25 degrees Celsius)</KM>
        <KM evidence="5">0.1 mM for 3-phosphoglycerate (at pH 7.4, 30 degrees Celsius and in the presence of Co(2+))</KM>
        <KM evidence="5">0.05 mM for 3-phosphoglycerate (at pH 7.4, 30 degrees Celsius and in the presence of Mn(2+))</KM>
        <KM evidence="8">0.148 mM for 3-phosphoglycerate (at pH 7.4, 37 degrees Celsius and in the presence of Mn(2+) and Co(2+))</KM>
        <KM evidence="4">0.16 mM for 2-phosphoglycerate (at pH 7.4 and 25 degrees Celsius)</KM>
    </kinetics>
</comment>
<comment type="pathway">
    <text evidence="14">Carbohydrate degradation; glycolysis; pyruvate from D-glyceraldehyde 3-phosphate: step 3/5.</text>
</comment>
<comment type="subunit">
    <text evidence="8">Monomer.</text>
</comment>
<comment type="interaction">
    <interactant intactId="EBI-7804448">
        <id>Q38AH1</id>
    </interactant>
    <interactant intactId="EBI-7804448">
        <id>Q38AH1</id>
        <label>PGAM</label>
    </interactant>
    <organismsDiffer>false</organismsDiffer>
    <experiments>2</experiments>
</comment>
<comment type="subcellular location">
    <subcellularLocation>
        <location evidence="7">Cytoplasm</location>
    </subcellularLocation>
</comment>
<comment type="developmental stage">
    <text evidence="7">Expressed in the procyclic and bloodstream stages (at protein level).</text>
</comment>
<comment type="disruption phenotype">
    <text evidence="6">RNAi-mediated knockdown causes a severe reduction in phosphoglycerate mutase activity and reduces the growth of the procyclic form of the parasite.</text>
</comment>
<comment type="similarity">
    <text evidence="13">Belongs to the BPG-independent phosphoglycerate mutase family.</text>
</comment>
<proteinExistence type="evidence at protein level"/>
<accession>Q38AH1</accession>
<protein>
    <recommendedName>
        <fullName evidence="13">2,3-bisphosphoglycerate-independent phosphoglycerate mutase</fullName>
        <shortName evidence="10">PGMi</shortName>
        <shortName evidence="12">TbiPGAM</shortName>
        <shortName evidence="11">iPGAM</shortName>
        <ecNumber evidence="4 5 7 8 15">5.4.2.12</ecNumber>
    </recommendedName>
    <alternativeName>
        <fullName evidence="9">Phosphoglycerate mutase</fullName>
    </alternativeName>
</protein>
<keyword id="KW-0002">3D-structure</keyword>
<keyword id="KW-0963">Cytoplasm</keyword>
<keyword id="KW-0324">Glycolysis</keyword>
<keyword id="KW-0413">Isomerase</keyword>
<keyword id="KW-0464">Manganese</keyword>
<keyword id="KW-0479">Metal-binding</keyword>
<keyword id="KW-1185">Reference proteome</keyword>
<reference evidence="19" key="1">
    <citation type="journal article" date="2005" name="Science">
        <title>The genome of the African trypanosome Trypanosoma brucei.</title>
        <authorList>
            <person name="Berriman M."/>
            <person name="Ghedin E."/>
            <person name="Hertz-Fowler C."/>
            <person name="Blandin G."/>
            <person name="Renauld H."/>
            <person name="Bartholomeu D.C."/>
            <person name="Lennard N.J."/>
            <person name="Caler E."/>
            <person name="Hamlin N.E."/>
            <person name="Haas B."/>
            <person name="Bohme U."/>
            <person name="Hannick L."/>
            <person name="Aslett M.A."/>
            <person name="Shallom J."/>
            <person name="Marcello L."/>
            <person name="Hou L."/>
            <person name="Wickstead B."/>
            <person name="Alsmark U.C.M."/>
            <person name="Arrowsmith C."/>
            <person name="Atkin R.J."/>
            <person name="Barron A.J."/>
            <person name="Bringaud F."/>
            <person name="Brooks K."/>
            <person name="Carrington M."/>
            <person name="Cherevach I."/>
            <person name="Chillingworth T.J."/>
            <person name="Churcher C."/>
            <person name="Clark L.N."/>
            <person name="Corton C.H."/>
            <person name="Cronin A."/>
            <person name="Davies R.M."/>
            <person name="Doggett J."/>
            <person name="Djikeng A."/>
            <person name="Feldblyum T."/>
            <person name="Field M.C."/>
            <person name="Fraser A."/>
            <person name="Goodhead I."/>
            <person name="Hance Z."/>
            <person name="Harper D."/>
            <person name="Harris B.R."/>
            <person name="Hauser H."/>
            <person name="Hostetler J."/>
            <person name="Ivens A."/>
            <person name="Jagels K."/>
            <person name="Johnson D."/>
            <person name="Johnson J."/>
            <person name="Jones K."/>
            <person name="Kerhornou A.X."/>
            <person name="Koo H."/>
            <person name="Larke N."/>
            <person name="Landfear S."/>
            <person name="Larkin C."/>
            <person name="Leech V."/>
            <person name="Line A."/>
            <person name="Lord A."/>
            <person name="Macleod A."/>
            <person name="Mooney P.J."/>
            <person name="Moule S."/>
            <person name="Martin D.M."/>
            <person name="Morgan G.W."/>
            <person name="Mungall K."/>
            <person name="Norbertczak H."/>
            <person name="Ormond D."/>
            <person name="Pai G."/>
            <person name="Peacock C.S."/>
            <person name="Peterson J."/>
            <person name="Quail M.A."/>
            <person name="Rabbinowitsch E."/>
            <person name="Rajandream M.A."/>
            <person name="Reitter C."/>
            <person name="Salzberg S.L."/>
            <person name="Sanders M."/>
            <person name="Schobel S."/>
            <person name="Sharp S."/>
            <person name="Simmonds M."/>
            <person name="Simpson A.J."/>
            <person name="Tallon L."/>
            <person name="Turner C.M."/>
            <person name="Tait A."/>
            <person name="Tivey A.R."/>
            <person name="Van Aken S."/>
            <person name="Walker D."/>
            <person name="Wanless D."/>
            <person name="Wang S."/>
            <person name="White B."/>
            <person name="White O."/>
            <person name="Whitehead S."/>
            <person name="Woodward J."/>
            <person name="Wortman J."/>
            <person name="Adams M.D."/>
            <person name="Embley T.M."/>
            <person name="Gull K."/>
            <person name="Ullu E."/>
            <person name="Barry J.D."/>
            <person name="Fairlamb A.H."/>
            <person name="Opperdoes F."/>
            <person name="Barrell B.G."/>
            <person name="Donelson J.E."/>
            <person name="Hall N."/>
            <person name="Fraser C.M."/>
            <person name="Melville S.E."/>
            <person name="El-Sayed N.M.A."/>
        </authorList>
    </citation>
    <scope>NUCLEOTIDE SEQUENCE [LARGE SCALE GENOMIC DNA]</scope>
    <source>
        <strain evidence="19">927/4 GUTat10.1</strain>
    </source>
</reference>
<reference evidence="13" key="2">
    <citation type="journal article" date="2000" name="Eur. J. Biochem.">
        <title>Trypanosoma brucei contains a 2,3-bisphosphoglycerate independent phosphoglycerate mutase.</title>
        <authorList>
            <person name="Chevalier N."/>
            <person name="Rigden D.J."/>
            <person name="Van Roy J."/>
            <person name="Opperdoes F.R."/>
            <person name="Michels P.A."/>
        </authorList>
    </citation>
    <scope>FUNCTION</scope>
    <scope>CATALYTIC ACTIVITY</scope>
    <scope>BIOPHYSICOCHEMICAL PROPERTIES</scope>
    <scope>PATHWAY</scope>
    <source>
        <strain evidence="9">427</strain>
    </source>
</reference>
<reference evidence="13" key="3">
    <citation type="journal article" date="2001" name="FEMS Microbiol. Lett.">
        <title>The 2,3-bisphosphoglycerate-independent phosphoglycerate mutase from Trypanosoma brucei: metal-ion dependency and phosphoenzyme formation.</title>
        <authorList>
            <person name="Collet J.F."/>
            <person name="Stroobant V."/>
            <person name="Van Schaftingen E."/>
        </authorList>
    </citation>
    <scope>FUNCTION</scope>
    <scope>CATALYTIC ACTIVITY</scope>
    <scope>COFACTOR</scope>
    <scope>BIOPHYSICOCHEMICAL PROPERTIES</scope>
    <scope>ACTIVE SITE</scope>
</reference>
<reference evidence="13" key="4">
    <citation type="journal article" date="2007" name="Parasitol. Res.">
        <title>Cofactor-independent phosphoglycerate mutase is an essential gene in procyclic form Trypanosoma brucei.</title>
        <authorList>
            <person name="Djikeng A."/>
            <person name="Raverdy S."/>
            <person name="Foster J."/>
            <person name="Bartholomeu D."/>
            <person name="Zhang Y."/>
            <person name="El-Sayed N.M."/>
            <person name="Carlow C."/>
        </authorList>
    </citation>
    <scope>FUNCTION</scope>
    <scope>CATALYTIC ACTIVITY</scope>
    <scope>DISRUPTION PHENOTYPE</scope>
</reference>
<reference evidence="13" key="5">
    <citation type="journal article" date="2011" name="Metallomics">
        <title>Phosphoglycerate mutase from Trypanosoma brucei is hyperactivated by cobalt in vitro, but not in vivo.</title>
        <authorList>
            <person name="Fuad F.A."/>
            <person name="Fothergill-Gilmore L.A."/>
            <person name="Nowicki M.W."/>
            <person name="Eades L.J."/>
            <person name="Morgan H.P."/>
            <person name="McNae I.W."/>
            <person name="Michels P.A."/>
            <person name="Walkinshaw M.D."/>
        </authorList>
    </citation>
    <scope>FUNCTION</scope>
    <scope>CATALYTIC ACTIVITY</scope>
    <scope>COFACTOR</scope>
    <scope>SUBCELLULAR LOCATION</scope>
    <scope>DEVELOPMENTAL STAGE</scope>
</reference>
<reference evidence="20" key="6">
    <citation type="journal article" date="2012" name="FEBS J.">
        <title>Structural role of the active-site metal in the conformation of Trypanosoma brucei phosphoglycerate mutase.</title>
        <authorList>
            <person name="Mercaldi G.F."/>
            <person name="Pereira H.M."/>
            <person name="Cordeiro A.T."/>
            <person name="Michels P.A."/>
            <person name="Thiemann O.H."/>
        </authorList>
    </citation>
    <scope>X-RAY CRYSTALLOGRAPHY (2.30 ANGSTROMS) IN COMPLEX WITH COBALT</scope>
    <scope>FUNCTION</scope>
    <scope>CATALYTIC ACTIVITY</scope>
    <scope>COFACTOR</scope>
    <scope>BIOPHYSICOCHEMICAL PROPERTIES</scope>
    <scope>SUBUNIT</scope>
    <scope>MUTAGENESIS OF ASP-319</scope>
</reference>